<dbReference type="EC" id="3.6.5.n1" evidence="1"/>
<dbReference type="EMBL" id="CP000655">
    <property type="protein sequence ID" value="ABP33624.1"/>
    <property type="molecule type" value="Genomic_DNA"/>
</dbReference>
<dbReference type="RefSeq" id="WP_011902249.1">
    <property type="nucleotide sequence ID" value="NC_009379.1"/>
</dbReference>
<dbReference type="SMR" id="A4SVW0"/>
<dbReference type="GeneID" id="31480755"/>
<dbReference type="KEGG" id="pnu:Pnuc_0404"/>
<dbReference type="eggNOG" id="COG0481">
    <property type="taxonomic scope" value="Bacteria"/>
</dbReference>
<dbReference type="HOGENOM" id="CLU_009995_3_3_4"/>
<dbReference type="Proteomes" id="UP000000231">
    <property type="component" value="Chromosome"/>
</dbReference>
<dbReference type="GO" id="GO:0005886">
    <property type="term" value="C:plasma membrane"/>
    <property type="evidence" value="ECO:0007669"/>
    <property type="project" value="UniProtKB-SubCell"/>
</dbReference>
<dbReference type="GO" id="GO:0005525">
    <property type="term" value="F:GTP binding"/>
    <property type="evidence" value="ECO:0007669"/>
    <property type="project" value="UniProtKB-UniRule"/>
</dbReference>
<dbReference type="GO" id="GO:0003924">
    <property type="term" value="F:GTPase activity"/>
    <property type="evidence" value="ECO:0007669"/>
    <property type="project" value="UniProtKB-UniRule"/>
</dbReference>
<dbReference type="GO" id="GO:0097216">
    <property type="term" value="F:guanosine tetraphosphate binding"/>
    <property type="evidence" value="ECO:0007669"/>
    <property type="project" value="UniProtKB-ARBA"/>
</dbReference>
<dbReference type="GO" id="GO:0043022">
    <property type="term" value="F:ribosome binding"/>
    <property type="evidence" value="ECO:0007669"/>
    <property type="project" value="UniProtKB-UniRule"/>
</dbReference>
<dbReference type="GO" id="GO:0003746">
    <property type="term" value="F:translation elongation factor activity"/>
    <property type="evidence" value="ECO:0007669"/>
    <property type="project" value="UniProtKB-UniRule"/>
</dbReference>
<dbReference type="GO" id="GO:0045727">
    <property type="term" value="P:positive regulation of translation"/>
    <property type="evidence" value="ECO:0007669"/>
    <property type="project" value="UniProtKB-UniRule"/>
</dbReference>
<dbReference type="CDD" id="cd16260">
    <property type="entry name" value="EF4_III"/>
    <property type="match status" value="1"/>
</dbReference>
<dbReference type="CDD" id="cd01890">
    <property type="entry name" value="LepA"/>
    <property type="match status" value="1"/>
</dbReference>
<dbReference type="CDD" id="cd03709">
    <property type="entry name" value="lepA_C"/>
    <property type="match status" value="1"/>
</dbReference>
<dbReference type="FunFam" id="3.40.50.300:FF:000078">
    <property type="entry name" value="Elongation factor 4"/>
    <property type="match status" value="1"/>
</dbReference>
<dbReference type="FunFam" id="2.40.30.10:FF:000015">
    <property type="entry name" value="Translation factor GUF1, mitochondrial"/>
    <property type="match status" value="1"/>
</dbReference>
<dbReference type="FunFam" id="3.30.70.240:FF:000007">
    <property type="entry name" value="Translation factor GUF1, mitochondrial"/>
    <property type="match status" value="1"/>
</dbReference>
<dbReference type="FunFam" id="3.30.70.2570:FF:000001">
    <property type="entry name" value="Translation factor GUF1, mitochondrial"/>
    <property type="match status" value="1"/>
</dbReference>
<dbReference type="FunFam" id="3.30.70.870:FF:000004">
    <property type="entry name" value="Translation factor GUF1, mitochondrial"/>
    <property type="match status" value="1"/>
</dbReference>
<dbReference type="Gene3D" id="3.30.70.240">
    <property type="match status" value="1"/>
</dbReference>
<dbReference type="Gene3D" id="3.30.70.2570">
    <property type="entry name" value="Elongation factor 4, C-terminal domain"/>
    <property type="match status" value="1"/>
</dbReference>
<dbReference type="Gene3D" id="3.30.70.870">
    <property type="entry name" value="Elongation Factor G (Translational Gtpase), domain 3"/>
    <property type="match status" value="1"/>
</dbReference>
<dbReference type="Gene3D" id="3.40.50.300">
    <property type="entry name" value="P-loop containing nucleotide triphosphate hydrolases"/>
    <property type="match status" value="1"/>
</dbReference>
<dbReference type="Gene3D" id="2.40.30.10">
    <property type="entry name" value="Translation factors"/>
    <property type="match status" value="1"/>
</dbReference>
<dbReference type="HAMAP" id="MF_00071">
    <property type="entry name" value="LepA"/>
    <property type="match status" value="1"/>
</dbReference>
<dbReference type="InterPro" id="IPR006297">
    <property type="entry name" value="EF-4"/>
</dbReference>
<dbReference type="InterPro" id="IPR035647">
    <property type="entry name" value="EFG_III/V"/>
</dbReference>
<dbReference type="InterPro" id="IPR000640">
    <property type="entry name" value="EFG_V-like"/>
</dbReference>
<dbReference type="InterPro" id="IPR004161">
    <property type="entry name" value="EFTu-like_2"/>
</dbReference>
<dbReference type="InterPro" id="IPR031157">
    <property type="entry name" value="G_TR_CS"/>
</dbReference>
<dbReference type="InterPro" id="IPR038363">
    <property type="entry name" value="LepA_C_sf"/>
</dbReference>
<dbReference type="InterPro" id="IPR013842">
    <property type="entry name" value="LepA_CTD"/>
</dbReference>
<dbReference type="InterPro" id="IPR035654">
    <property type="entry name" value="LepA_IV"/>
</dbReference>
<dbReference type="InterPro" id="IPR027417">
    <property type="entry name" value="P-loop_NTPase"/>
</dbReference>
<dbReference type="InterPro" id="IPR005225">
    <property type="entry name" value="Small_GTP-bd"/>
</dbReference>
<dbReference type="InterPro" id="IPR000795">
    <property type="entry name" value="T_Tr_GTP-bd_dom"/>
</dbReference>
<dbReference type="InterPro" id="IPR009000">
    <property type="entry name" value="Transl_B-barrel_sf"/>
</dbReference>
<dbReference type="NCBIfam" id="TIGR01393">
    <property type="entry name" value="lepA"/>
    <property type="match status" value="1"/>
</dbReference>
<dbReference type="NCBIfam" id="TIGR00231">
    <property type="entry name" value="small_GTP"/>
    <property type="match status" value="1"/>
</dbReference>
<dbReference type="PANTHER" id="PTHR43512:SF4">
    <property type="entry name" value="TRANSLATION FACTOR GUF1 HOMOLOG, CHLOROPLASTIC"/>
    <property type="match status" value="1"/>
</dbReference>
<dbReference type="PANTHER" id="PTHR43512">
    <property type="entry name" value="TRANSLATION FACTOR GUF1-RELATED"/>
    <property type="match status" value="1"/>
</dbReference>
<dbReference type="Pfam" id="PF00679">
    <property type="entry name" value="EFG_C"/>
    <property type="match status" value="1"/>
</dbReference>
<dbReference type="Pfam" id="PF00009">
    <property type="entry name" value="GTP_EFTU"/>
    <property type="match status" value="1"/>
</dbReference>
<dbReference type="Pfam" id="PF03144">
    <property type="entry name" value="GTP_EFTU_D2"/>
    <property type="match status" value="1"/>
</dbReference>
<dbReference type="Pfam" id="PF06421">
    <property type="entry name" value="LepA_C"/>
    <property type="match status" value="1"/>
</dbReference>
<dbReference type="PRINTS" id="PR00315">
    <property type="entry name" value="ELONGATNFCT"/>
</dbReference>
<dbReference type="SMART" id="SM00838">
    <property type="entry name" value="EFG_C"/>
    <property type="match status" value="1"/>
</dbReference>
<dbReference type="SUPFAM" id="SSF54980">
    <property type="entry name" value="EF-G C-terminal domain-like"/>
    <property type="match status" value="2"/>
</dbReference>
<dbReference type="SUPFAM" id="SSF52540">
    <property type="entry name" value="P-loop containing nucleoside triphosphate hydrolases"/>
    <property type="match status" value="1"/>
</dbReference>
<dbReference type="SUPFAM" id="SSF50447">
    <property type="entry name" value="Translation proteins"/>
    <property type="match status" value="1"/>
</dbReference>
<dbReference type="PROSITE" id="PS00301">
    <property type="entry name" value="G_TR_1"/>
    <property type="match status" value="1"/>
</dbReference>
<dbReference type="PROSITE" id="PS51722">
    <property type="entry name" value="G_TR_2"/>
    <property type="match status" value="1"/>
</dbReference>
<evidence type="ECO:0000255" key="1">
    <source>
        <dbReference type="HAMAP-Rule" id="MF_00071"/>
    </source>
</evidence>
<organism>
    <name type="scientific">Polynucleobacter asymbioticus (strain DSM 18221 / CIP 109841 / QLW-P1DMWA-1)</name>
    <name type="common">Polynucleobacter necessarius subsp. asymbioticus</name>
    <dbReference type="NCBI Taxonomy" id="312153"/>
    <lineage>
        <taxon>Bacteria</taxon>
        <taxon>Pseudomonadati</taxon>
        <taxon>Pseudomonadota</taxon>
        <taxon>Betaproteobacteria</taxon>
        <taxon>Burkholderiales</taxon>
        <taxon>Burkholderiaceae</taxon>
        <taxon>Polynucleobacter</taxon>
    </lineage>
</organism>
<gene>
    <name evidence="1" type="primary">lepA</name>
    <name type="ordered locus">Pnuc_0404</name>
</gene>
<name>LEPA_POLAQ</name>
<accession>A4SVW0</accession>
<proteinExistence type="inferred from homology"/>
<sequence length="601" mass="66222">MDLIRNFSIIAHIDHGKSTLADRIIQHCGGLSDREMEAQVLDSMDIERERGITIKAQTAALTYKSRDGKTYNINLIDTPGHVDFSYEVSRSLSACEGALLVVDASQGVEAQTVANCYMALELGVEVVPVLNKIDLPQADPERAKKEIEDVIGIDASHAVTCSAKTGLGVQDVIEEMIARVPPPTGNAADPLQALIIDSWFDNYVGVVMLVRVVNGSLKPKDKITLMANGSSHLVEHVGVFSPKSIDRPELSAGQVGFVIAGIKELKAAKVGDTVTHSPGQQGRVPATEPLPGFKEVKPQVFAGLYPVESSEYDQLRESLEKLQLNDASLLYEPEVSQALGFGFRCGFLGLLHMEIVQERLERQYGMNLITTAPTVVYQVEQSDGSILSVDNPSKMPEASKINTILEPIVTVNLYMPQEYVGAIITLCVGKRGIQMDMNYLGRQVKLTYELPMAEIVLDFFDKMKSISRGYASMDYEFKEYRPADVVKVDILINGERVDALSVIVHRSNSQHRGREVVAKMRGIIPRQMFDVAIQAAIGSNIVARENVKALRKNVLAKCYGGDISRKRKLLEKQKEGKKRMKQVGNVEIPQEAFLAILQVDD</sequence>
<feature type="chain" id="PRO_1000075142" description="Elongation factor 4">
    <location>
        <begin position="1"/>
        <end position="601"/>
    </location>
</feature>
<feature type="domain" description="tr-type G">
    <location>
        <begin position="2"/>
        <end position="184"/>
    </location>
</feature>
<feature type="binding site" evidence="1">
    <location>
        <begin position="14"/>
        <end position="19"/>
    </location>
    <ligand>
        <name>GTP</name>
        <dbReference type="ChEBI" id="CHEBI:37565"/>
    </ligand>
</feature>
<feature type="binding site" evidence="1">
    <location>
        <begin position="131"/>
        <end position="134"/>
    </location>
    <ligand>
        <name>GTP</name>
        <dbReference type="ChEBI" id="CHEBI:37565"/>
    </ligand>
</feature>
<reference key="1">
    <citation type="journal article" date="2012" name="Stand. Genomic Sci.">
        <title>Complete genome sequence of Polynucleobacter necessarius subsp. asymbioticus type strain (QLW-P1DMWA-1(T)).</title>
        <authorList>
            <person name="Meincke L."/>
            <person name="Copeland A."/>
            <person name="Lapidus A."/>
            <person name="Lucas S."/>
            <person name="Berry K.W."/>
            <person name="Del Rio T.G."/>
            <person name="Hammon N."/>
            <person name="Dalin E."/>
            <person name="Tice H."/>
            <person name="Pitluck S."/>
            <person name="Richardson P."/>
            <person name="Bruce D."/>
            <person name="Goodwin L."/>
            <person name="Han C."/>
            <person name="Tapia R."/>
            <person name="Detter J.C."/>
            <person name="Schmutz J."/>
            <person name="Brettin T."/>
            <person name="Larimer F."/>
            <person name="Land M."/>
            <person name="Hauser L."/>
            <person name="Kyrpides N.C."/>
            <person name="Ivanova N."/>
            <person name="Goker M."/>
            <person name="Woyke T."/>
            <person name="Wu Q.L."/>
            <person name="Pockl M."/>
            <person name="Hahn M.W."/>
            <person name="Klenk H.P."/>
        </authorList>
    </citation>
    <scope>NUCLEOTIDE SEQUENCE [LARGE SCALE GENOMIC DNA]</scope>
    <source>
        <strain>DSM 18221 / CIP 109841 / QLW-P1DMWA-1</strain>
    </source>
</reference>
<keyword id="KW-0997">Cell inner membrane</keyword>
<keyword id="KW-1003">Cell membrane</keyword>
<keyword id="KW-0342">GTP-binding</keyword>
<keyword id="KW-0378">Hydrolase</keyword>
<keyword id="KW-0472">Membrane</keyword>
<keyword id="KW-0547">Nucleotide-binding</keyword>
<keyword id="KW-0648">Protein biosynthesis</keyword>
<keyword id="KW-1185">Reference proteome</keyword>
<comment type="function">
    <text evidence="1">Required for accurate and efficient protein synthesis under certain stress conditions. May act as a fidelity factor of the translation reaction, by catalyzing a one-codon backward translocation of tRNAs on improperly translocated ribosomes. Back-translocation proceeds from a post-translocation (POST) complex to a pre-translocation (PRE) complex, thus giving elongation factor G a second chance to translocate the tRNAs correctly. Binds to ribosomes in a GTP-dependent manner.</text>
</comment>
<comment type="catalytic activity">
    <reaction evidence="1">
        <text>GTP + H2O = GDP + phosphate + H(+)</text>
        <dbReference type="Rhea" id="RHEA:19669"/>
        <dbReference type="ChEBI" id="CHEBI:15377"/>
        <dbReference type="ChEBI" id="CHEBI:15378"/>
        <dbReference type="ChEBI" id="CHEBI:37565"/>
        <dbReference type="ChEBI" id="CHEBI:43474"/>
        <dbReference type="ChEBI" id="CHEBI:58189"/>
        <dbReference type="EC" id="3.6.5.n1"/>
    </reaction>
</comment>
<comment type="subcellular location">
    <subcellularLocation>
        <location evidence="1">Cell inner membrane</location>
        <topology evidence="1">Peripheral membrane protein</topology>
        <orientation evidence="1">Cytoplasmic side</orientation>
    </subcellularLocation>
</comment>
<comment type="similarity">
    <text evidence="1">Belongs to the TRAFAC class translation factor GTPase superfamily. Classic translation factor GTPase family. LepA subfamily.</text>
</comment>
<protein>
    <recommendedName>
        <fullName evidence="1">Elongation factor 4</fullName>
        <shortName evidence="1">EF-4</shortName>
        <ecNumber evidence="1">3.6.5.n1</ecNumber>
    </recommendedName>
    <alternativeName>
        <fullName evidence="1">Ribosomal back-translocase LepA</fullName>
    </alternativeName>
</protein>